<dbReference type="EC" id="2.3.1.89" evidence="1"/>
<dbReference type="EMBL" id="CP001083">
    <property type="protein sequence ID" value="ACQ55145.1"/>
    <property type="molecule type" value="Genomic_DNA"/>
</dbReference>
<dbReference type="SMR" id="C3KTL7"/>
<dbReference type="KEGG" id="cbi:CLJ_B3427"/>
<dbReference type="HOGENOM" id="CLU_103751_0_0_9"/>
<dbReference type="UniPathway" id="UPA00034">
    <property type="reaction ID" value="UER00022"/>
</dbReference>
<dbReference type="Proteomes" id="UP000002333">
    <property type="component" value="Chromosome"/>
</dbReference>
<dbReference type="GO" id="GO:0047200">
    <property type="term" value="F:tetrahydrodipicolinate N-acetyltransferase activity"/>
    <property type="evidence" value="ECO:0007669"/>
    <property type="project" value="UniProtKB-EC"/>
</dbReference>
<dbReference type="GO" id="GO:0019877">
    <property type="term" value="P:diaminopimelate biosynthetic process"/>
    <property type="evidence" value="ECO:0007669"/>
    <property type="project" value="UniProtKB-UniRule"/>
</dbReference>
<dbReference type="GO" id="GO:0009089">
    <property type="term" value="P:lysine biosynthetic process via diaminopimelate"/>
    <property type="evidence" value="ECO:0007669"/>
    <property type="project" value="UniProtKB-UniRule"/>
</dbReference>
<dbReference type="CDD" id="cd03350">
    <property type="entry name" value="LbH_THP_succinylT"/>
    <property type="match status" value="1"/>
</dbReference>
<dbReference type="Gene3D" id="2.160.10.10">
    <property type="entry name" value="Hexapeptide repeat proteins"/>
    <property type="match status" value="1"/>
</dbReference>
<dbReference type="Gene3D" id="3.30.70.250">
    <property type="entry name" value="Malonyl-CoA ACP transacylase, ACP-binding"/>
    <property type="match status" value="1"/>
</dbReference>
<dbReference type="HAMAP" id="MF_01691">
    <property type="entry name" value="DapH"/>
    <property type="match status" value="1"/>
</dbReference>
<dbReference type="InterPro" id="IPR019873">
    <property type="entry name" value="DapH"/>
</dbReference>
<dbReference type="InterPro" id="IPR013710">
    <property type="entry name" value="DapH_N"/>
</dbReference>
<dbReference type="InterPro" id="IPR001451">
    <property type="entry name" value="Hexapep"/>
</dbReference>
<dbReference type="InterPro" id="IPR018357">
    <property type="entry name" value="Hexapep_transf_CS"/>
</dbReference>
<dbReference type="InterPro" id="IPR050179">
    <property type="entry name" value="Trans_hexapeptide_repeat"/>
</dbReference>
<dbReference type="InterPro" id="IPR011004">
    <property type="entry name" value="Trimer_LpxA-like_sf"/>
</dbReference>
<dbReference type="NCBIfam" id="TIGR03532">
    <property type="entry name" value="DapD_Ac"/>
    <property type="match status" value="1"/>
</dbReference>
<dbReference type="PANTHER" id="PTHR43300:SF10">
    <property type="entry name" value="2,3,4,5-TETRAHYDROPYRIDINE-2,6-DICARBOXYLATE N-ACETYLTRANSFERASE"/>
    <property type="match status" value="1"/>
</dbReference>
<dbReference type="PANTHER" id="PTHR43300">
    <property type="entry name" value="ACETYLTRANSFERASE"/>
    <property type="match status" value="1"/>
</dbReference>
<dbReference type="Pfam" id="PF08503">
    <property type="entry name" value="DapH_N"/>
    <property type="match status" value="1"/>
</dbReference>
<dbReference type="Pfam" id="PF14602">
    <property type="entry name" value="Hexapep_2"/>
    <property type="match status" value="2"/>
</dbReference>
<dbReference type="SUPFAM" id="SSF51161">
    <property type="entry name" value="Trimeric LpxA-like enzymes"/>
    <property type="match status" value="1"/>
</dbReference>
<dbReference type="PROSITE" id="PS00101">
    <property type="entry name" value="HEXAPEP_TRANSFERASES"/>
    <property type="match status" value="1"/>
</dbReference>
<keyword id="KW-0012">Acyltransferase</keyword>
<keyword id="KW-0028">Amino-acid biosynthesis</keyword>
<keyword id="KW-0220">Diaminopimelate biosynthesis</keyword>
<keyword id="KW-0457">Lysine biosynthesis</keyword>
<keyword id="KW-0677">Repeat</keyword>
<keyword id="KW-0808">Transferase</keyword>
<evidence type="ECO:0000255" key="1">
    <source>
        <dbReference type="HAMAP-Rule" id="MF_01691"/>
    </source>
</evidence>
<comment type="function">
    <text evidence="1">Catalyzes the transfer of an acetyl group from acetyl-CoA to tetrahydrodipicolinate.</text>
</comment>
<comment type="catalytic activity">
    <reaction evidence="1">
        <text>(S)-2,3,4,5-tetrahydrodipicolinate + acetyl-CoA + H2O = L-2-acetamido-6-oxoheptanedioate + CoA</text>
        <dbReference type="Rhea" id="RHEA:13085"/>
        <dbReference type="ChEBI" id="CHEBI:15377"/>
        <dbReference type="ChEBI" id="CHEBI:16845"/>
        <dbReference type="ChEBI" id="CHEBI:57287"/>
        <dbReference type="ChEBI" id="CHEBI:57288"/>
        <dbReference type="ChEBI" id="CHEBI:58117"/>
        <dbReference type="EC" id="2.3.1.89"/>
    </reaction>
</comment>
<comment type="pathway">
    <text evidence="1">Amino-acid biosynthesis; L-lysine biosynthesis via DAP pathway; LL-2,6-diaminopimelate from (S)-tetrahydrodipicolinate (acetylase route): step 1/3.</text>
</comment>
<comment type="similarity">
    <text evidence="1">Belongs to the transferase hexapeptide repeat family. DapH subfamily.</text>
</comment>
<accession>C3KTL7</accession>
<reference key="1">
    <citation type="submission" date="2008-05" db="EMBL/GenBank/DDBJ databases">
        <title>Genome sequence of Clostridium botulinum Ba4 strain 657.</title>
        <authorList>
            <person name="Shrivastava S."/>
            <person name="Brown J.L."/>
            <person name="Bruce D."/>
            <person name="Detter C."/>
            <person name="Munk C."/>
            <person name="Smith L.A."/>
            <person name="Smith T.J."/>
            <person name="Sutton G."/>
            <person name="Brettin T.S."/>
        </authorList>
    </citation>
    <scope>NUCLEOTIDE SEQUENCE [LARGE SCALE GENOMIC DNA]</scope>
    <source>
        <strain>657 / Type Ba4</strain>
    </source>
</reference>
<name>DAPH_CLOB6</name>
<feature type="chain" id="PRO_1000215927" description="2,3,4,5-tetrahydropyridine-2,6-dicarboxylate N-acetyltransferase">
    <location>
        <begin position="1"/>
        <end position="236"/>
    </location>
</feature>
<gene>
    <name evidence="1" type="primary">dapH</name>
    <name type="ordered locus">CLJ_B3427</name>
</gene>
<sequence length="236" mass="25317">MSYNLTDPYEIARYIKEAKKSTPIKAYIEGDLSNCDFTNIEKFNSGDLYILFGESEEILVIIEKNKDKIKNCRIEQDRRKSAIPLLDMLKINARIEPGATIRDKVIIGENAVIMMGAVINIGAEIGEGTMVDMNAVVGARGKLGKNVHLGAGAVVAGVLEPPSSDPCTIEDNVLIGANAVILEGIKIGKGSVVAAGSIVTTDVPENVVVAGAPAKIIKEVDVKTKDKTKLLDDLRK</sequence>
<proteinExistence type="inferred from homology"/>
<organism>
    <name type="scientific">Clostridium botulinum (strain 657 / Type Ba4)</name>
    <dbReference type="NCBI Taxonomy" id="515621"/>
    <lineage>
        <taxon>Bacteria</taxon>
        <taxon>Bacillati</taxon>
        <taxon>Bacillota</taxon>
        <taxon>Clostridia</taxon>
        <taxon>Eubacteriales</taxon>
        <taxon>Clostridiaceae</taxon>
        <taxon>Clostridium</taxon>
    </lineage>
</organism>
<protein>
    <recommendedName>
        <fullName evidence="1">2,3,4,5-tetrahydropyridine-2,6-dicarboxylate N-acetyltransferase</fullName>
        <ecNumber evidence="1">2.3.1.89</ecNumber>
    </recommendedName>
    <alternativeName>
        <fullName evidence="1">Tetrahydrodipicolinate N-acetyltransferase</fullName>
        <shortName evidence="1">THP acetyltransferase</shortName>
        <shortName evidence="1">Tetrahydropicolinate acetylase</shortName>
    </alternativeName>
</protein>